<organism>
    <name type="scientific">Caenorhabditis elegans</name>
    <dbReference type="NCBI Taxonomy" id="6239"/>
    <lineage>
        <taxon>Eukaryota</taxon>
        <taxon>Metazoa</taxon>
        <taxon>Ecdysozoa</taxon>
        <taxon>Nematoda</taxon>
        <taxon>Chromadorea</taxon>
        <taxon>Rhabditida</taxon>
        <taxon>Rhabditina</taxon>
        <taxon>Rhabditomorpha</taxon>
        <taxon>Rhabditoidea</taxon>
        <taxon>Rhabditidae</taxon>
        <taxon>Peloderinae</taxon>
        <taxon>Caenorhabditis</taxon>
    </lineage>
</organism>
<name>DCT5_CAEEL</name>
<protein>
    <recommendedName>
        <fullName>Protein dct-5</fullName>
    </recommendedName>
    <alternativeName>
        <fullName>Daf-16/foxo controlled, germline tumor affecting protein 5</fullName>
    </alternativeName>
</protein>
<feature type="chain" id="PRO_0000065279" description="Protein dct-5">
    <location>
        <begin position="1"/>
        <end position="207"/>
    </location>
</feature>
<feature type="transmembrane region" description="Helical" evidence="1">
    <location>
        <begin position="13"/>
        <end position="33"/>
    </location>
</feature>
<dbReference type="EMBL" id="FO081043">
    <property type="protein sequence ID" value="CCD68753.1"/>
    <property type="molecule type" value="Genomic_DNA"/>
</dbReference>
<dbReference type="PIR" id="T15965">
    <property type="entry name" value="T15965"/>
</dbReference>
<dbReference type="RefSeq" id="NP_495031.2">
    <property type="nucleotide sequence ID" value="NM_062630.5"/>
</dbReference>
<dbReference type="FunCoup" id="Q09304">
    <property type="interactions" value="63"/>
</dbReference>
<dbReference type="STRING" id="6239.F07F6.5.1"/>
<dbReference type="PaxDb" id="6239-F07F6.5"/>
<dbReference type="PeptideAtlas" id="Q09304"/>
<dbReference type="EnsemblMetazoa" id="F07F6.5.1">
    <property type="protein sequence ID" value="F07F6.5.1"/>
    <property type="gene ID" value="WBGene00017218"/>
</dbReference>
<dbReference type="GeneID" id="184148"/>
<dbReference type="KEGG" id="cel:CELE_F07F6.5"/>
<dbReference type="AGR" id="WB:WBGene00017218"/>
<dbReference type="CTD" id="184148"/>
<dbReference type="WormBase" id="F07F6.5">
    <property type="protein sequence ID" value="CE41556"/>
    <property type="gene ID" value="WBGene00017218"/>
    <property type="gene designation" value="dct-5"/>
</dbReference>
<dbReference type="eggNOG" id="ENOG502SX5D">
    <property type="taxonomic scope" value="Eukaryota"/>
</dbReference>
<dbReference type="GeneTree" id="ENSGT00970000196417"/>
<dbReference type="HOGENOM" id="CLU_124063_0_0_1"/>
<dbReference type="InParanoid" id="Q09304"/>
<dbReference type="OMA" id="YALEQMS"/>
<dbReference type="OrthoDB" id="5840377at2759"/>
<dbReference type="PRO" id="PR:Q09304"/>
<dbReference type="Proteomes" id="UP000001940">
    <property type="component" value="Chromosome II"/>
</dbReference>
<dbReference type="Bgee" id="WBGene00017218">
    <property type="expression patterns" value="Expressed in larva and 2 other cell types or tissues"/>
</dbReference>
<dbReference type="GO" id="GO:0016020">
    <property type="term" value="C:membrane"/>
    <property type="evidence" value="ECO:0007669"/>
    <property type="project" value="UniProtKB-SubCell"/>
</dbReference>
<dbReference type="GO" id="GO:0050829">
    <property type="term" value="P:defense response to Gram-negative bacterium"/>
    <property type="evidence" value="ECO:0000315"/>
    <property type="project" value="UniProtKB"/>
</dbReference>
<dbReference type="InterPro" id="IPR035161">
    <property type="entry name" value="DUF5332"/>
</dbReference>
<dbReference type="PANTHER" id="PTHR38612:SF2">
    <property type="entry name" value="PROTEIN DCT-5"/>
    <property type="match status" value="1"/>
</dbReference>
<dbReference type="PANTHER" id="PTHR38612">
    <property type="entry name" value="PROTEIN DCT-5-RELATED"/>
    <property type="match status" value="1"/>
</dbReference>
<dbReference type="Pfam" id="PF17266">
    <property type="entry name" value="DUF5332"/>
    <property type="match status" value="1"/>
</dbReference>
<keyword id="KW-0472">Membrane</keyword>
<keyword id="KW-1185">Reference proteome</keyword>
<keyword id="KW-0812">Transmembrane</keyword>
<keyword id="KW-1133">Transmembrane helix</keyword>
<comment type="function">
    <text evidence="2 3">Acts downstream of daf-16/foxo to suppress tumors induced by disruption of gld-1. Potentially a direct target of daf-15/foxo.</text>
</comment>
<comment type="subcellular location">
    <subcellularLocation>
        <location evidence="4">Membrane</location>
        <topology evidence="4">Single-pass membrane protein</topology>
    </subcellularLocation>
</comment>
<sequence>MKSERVNYPVKLLNFILSIMNSYLFVLIVSIGFAESSSPKSSTSCSLMTSCAVEKCLDRGMVGRIITESSRDEVFGNLVEKFDMVCIAAKCGNECSQCKHCHYALEQMSALAQGEKTSGLCPKLETCVFNCLTEDVSKVLSCVATRCNVHCYDGDCPSCKMISRRIFSNICKQHSMTTQPQIKYEGTCPNLFMELADDYVAMKKKKL</sequence>
<gene>
    <name type="primary">dct-5</name>
    <name type="ORF">F07F6.5</name>
</gene>
<reference key="1">
    <citation type="journal article" date="1998" name="Science">
        <title>Genome sequence of the nematode C. elegans: a platform for investigating biology.</title>
        <authorList>
            <consortium name="The C. elegans sequencing consortium"/>
        </authorList>
    </citation>
    <scope>NUCLEOTIDE SEQUENCE [LARGE SCALE GENOMIC DNA]</scope>
    <source>
        <strain>Bristol N2</strain>
    </source>
</reference>
<reference key="2">
    <citation type="journal article" date="2006" name="Nat. Genet.">
        <title>Identification of direct DAF-16 targets controlling longevity, metabolism and diapause by chromatin immunoprecipitation.</title>
        <authorList>
            <person name="Oh S.W."/>
            <person name="Mukhopadhyay A."/>
            <person name="Dixit B.L."/>
            <person name="Raha T."/>
            <person name="Green M.R."/>
            <person name="Tissenbaum H.A."/>
        </authorList>
    </citation>
    <scope>FUNCTION</scope>
</reference>
<reference key="3">
    <citation type="journal article" date="2007" name="Nat. Genet.">
        <title>DAF-16/FOXO targets genes that regulate tumor growth in Caenorhabditis elegans.</title>
        <authorList>
            <person name="Pinkston-Gosse J."/>
            <person name="Kenyon C."/>
        </authorList>
    </citation>
    <scope>FUNCTION</scope>
</reference>
<evidence type="ECO:0000255" key="1"/>
<evidence type="ECO:0000269" key="2">
    <source>
    </source>
</evidence>
<evidence type="ECO:0000269" key="3">
    <source>
    </source>
</evidence>
<evidence type="ECO:0000305" key="4"/>
<proteinExistence type="predicted"/>
<accession>Q09304</accession>